<keyword id="KW-1185">Reference proteome</keyword>
<feature type="chain" id="PRO_0000433515" description="Protein AE7-like 1">
    <location>
        <begin position="1"/>
        <end position="154"/>
    </location>
</feature>
<protein>
    <recommendedName>
        <fullName evidence="3">Protein AE7-like 1</fullName>
    </recommendedName>
    <alternativeName>
        <fullName evidence="4">MIP18 family protein At3g50845</fullName>
    </alternativeName>
</protein>
<gene>
    <name evidence="3" type="primary">AEL1</name>
    <name evidence="5" type="ordered locus">At3g50845</name>
    <name evidence="6" type="ORF">F18B3</name>
</gene>
<organism evidence="7">
    <name type="scientific">Arabidopsis thaliana</name>
    <name type="common">Mouse-ear cress</name>
    <dbReference type="NCBI Taxonomy" id="3702"/>
    <lineage>
        <taxon>Eukaryota</taxon>
        <taxon>Viridiplantae</taxon>
        <taxon>Streptophyta</taxon>
        <taxon>Embryophyta</taxon>
        <taxon>Tracheophyta</taxon>
        <taxon>Spermatophyta</taxon>
        <taxon>Magnoliopsida</taxon>
        <taxon>eudicotyledons</taxon>
        <taxon>Gunneridae</taxon>
        <taxon>Pentapetalae</taxon>
        <taxon>rosids</taxon>
        <taxon>malvids</taxon>
        <taxon>Brassicales</taxon>
        <taxon>Brassicaceae</taxon>
        <taxon>Camelineae</taxon>
        <taxon>Arabidopsis</taxon>
    </lineage>
</organism>
<dbReference type="EMBL" id="AL049862">
    <property type="status" value="NOT_ANNOTATED_CDS"/>
    <property type="molecule type" value="Genomic_DNA"/>
</dbReference>
<dbReference type="EMBL" id="CP002686">
    <property type="protein sequence ID" value="AEE78717.1"/>
    <property type="molecule type" value="Genomic_DNA"/>
</dbReference>
<dbReference type="RefSeq" id="NP_001078267.1">
    <property type="nucleotide sequence ID" value="NM_001084798.1"/>
</dbReference>
<dbReference type="SMR" id="A8MR89"/>
<dbReference type="FunCoup" id="A8MR89">
    <property type="interactions" value="3116"/>
</dbReference>
<dbReference type="STRING" id="3702.A8MR89"/>
<dbReference type="PaxDb" id="3702-AT3G50845.1"/>
<dbReference type="ProteomicsDB" id="244770"/>
<dbReference type="EnsemblPlants" id="AT3G50845.1">
    <property type="protein sequence ID" value="AT3G50845.1"/>
    <property type="gene ID" value="AT3G50845"/>
</dbReference>
<dbReference type="GeneID" id="5008077"/>
<dbReference type="Gramene" id="AT3G50845.1">
    <property type="protein sequence ID" value="AT3G50845.1"/>
    <property type="gene ID" value="AT3G50845"/>
</dbReference>
<dbReference type="KEGG" id="ath:AT3G50845"/>
<dbReference type="Araport" id="AT3G50845"/>
<dbReference type="TAIR" id="AT3G50845"/>
<dbReference type="eggNOG" id="KOG3381">
    <property type="taxonomic scope" value="Eukaryota"/>
</dbReference>
<dbReference type="HOGENOM" id="CLU_075876_3_1_1"/>
<dbReference type="InParanoid" id="A8MR89"/>
<dbReference type="OMA" id="HELGYRN"/>
<dbReference type="PhylomeDB" id="A8MR89"/>
<dbReference type="PRO" id="PR:A8MR89"/>
<dbReference type="Proteomes" id="UP000006548">
    <property type="component" value="Chromosome 3"/>
</dbReference>
<dbReference type="ExpressionAtlas" id="A8MR89">
    <property type="expression patterns" value="baseline and differential"/>
</dbReference>
<dbReference type="GO" id="GO:0051604">
    <property type="term" value="P:protein maturation"/>
    <property type="evidence" value="ECO:0007669"/>
    <property type="project" value="InterPro"/>
</dbReference>
<dbReference type="FunFam" id="3.30.300.130:FF:000010">
    <property type="entry name" value="Protein AE7-like 1"/>
    <property type="match status" value="1"/>
</dbReference>
<dbReference type="Gene3D" id="6.10.250.1280">
    <property type="match status" value="1"/>
</dbReference>
<dbReference type="Gene3D" id="3.30.300.130">
    <property type="entry name" value="Fe-S cluster assembly (FSCA)"/>
    <property type="match status" value="1"/>
</dbReference>
<dbReference type="InterPro" id="IPR034904">
    <property type="entry name" value="FSCA_dom_sf"/>
</dbReference>
<dbReference type="InterPro" id="IPR039796">
    <property type="entry name" value="MIP18"/>
</dbReference>
<dbReference type="InterPro" id="IPR002744">
    <property type="entry name" value="MIP18-like"/>
</dbReference>
<dbReference type="PANTHER" id="PTHR12377">
    <property type="entry name" value="CYTOSOLIC IRON-SULFUR ASSEMBLY COMPONENT 2B-RELATED"/>
    <property type="match status" value="1"/>
</dbReference>
<dbReference type="PANTHER" id="PTHR12377:SF3">
    <property type="entry name" value="PROTEIN AE7-LIKE 1"/>
    <property type="match status" value="1"/>
</dbReference>
<dbReference type="Pfam" id="PF01883">
    <property type="entry name" value="FeS_assembly_P"/>
    <property type="match status" value="1"/>
</dbReference>
<dbReference type="SUPFAM" id="SSF117916">
    <property type="entry name" value="Fe-S cluster assembly (FSCA) domain-like"/>
    <property type="match status" value="1"/>
</dbReference>
<reference key="1">
    <citation type="journal article" date="2000" name="Nature">
        <title>Sequence and analysis of chromosome 3 of the plant Arabidopsis thaliana.</title>
        <authorList>
            <person name="Salanoubat M."/>
            <person name="Lemcke K."/>
            <person name="Rieger M."/>
            <person name="Ansorge W."/>
            <person name="Unseld M."/>
            <person name="Fartmann B."/>
            <person name="Valle G."/>
            <person name="Bloecker H."/>
            <person name="Perez-Alonso M."/>
            <person name="Obermaier B."/>
            <person name="Delseny M."/>
            <person name="Boutry M."/>
            <person name="Grivell L.A."/>
            <person name="Mache R."/>
            <person name="Puigdomenech P."/>
            <person name="De Simone V."/>
            <person name="Choisne N."/>
            <person name="Artiguenave F."/>
            <person name="Robert C."/>
            <person name="Brottier P."/>
            <person name="Wincker P."/>
            <person name="Cattolico L."/>
            <person name="Weissenbach J."/>
            <person name="Saurin W."/>
            <person name="Quetier F."/>
            <person name="Schaefer M."/>
            <person name="Mueller-Auer S."/>
            <person name="Gabel C."/>
            <person name="Fuchs M."/>
            <person name="Benes V."/>
            <person name="Wurmbach E."/>
            <person name="Drzonek H."/>
            <person name="Erfle H."/>
            <person name="Jordan N."/>
            <person name="Bangert S."/>
            <person name="Wiedelmann R."/>
            <person name="Kranz H."/>
            <person name="Voss H."/>
            <person name="Holland R."/>
            <person name="Brandt P."/>
            <person name="Nyakatura G."/>
            <person name="Vezzi A."/>
            <person name="D'Angelo M."/>
            <person name="Pallavicini A."/>
            <person name="Toppo S."/>
            <person name="Simionati B."/>
            <person name="Conrad A."/>
            <person name="Hornischer K."/>
            <person name="Kauer G."/>
            <person name="Loehnert T.-H."/>
            <person name="Nordsiek G."/>
            <person name="Reichelt J."/>
            <person name="Scharfe M."/>
            <person name="Schoen O."/>
            <person name="Bargues M."/>
            <person name="Terol J."/>
            <person name="Climent J."/>
            <person name="Navarro P."/>
            <person name="Collado C."/>
            <person name="Perez-Perez A."/>
            <person name="Ottenwaelder B."/>
            <person name="Duchemin D."/>
            <person name="Cooke R."/>
            <person name="Laudie M."/>
            <person name="Berger-Llauro C."/>
            <person name="Purnelle B."/>
            <person name="Masuy D."/>
            <person name="de Haan M."/>
            <person name="Maarse A.C."/>
            <person name="Alcaraz J.-P."/>
            <person name="Cottet A."/>
            <person name="Casacuberta E."/>
            <person name="Monfort A."/>
            <person name="Argiriou A."/>
            <person name="Flores M."/>
            <person name="Liguori R."/>
            <person name="Vitale D."/>
            <person name="Mannhaupt G."/>
            <person name="Haase D."/>
            <person name="Schoof H."/>
            <person name="Rudd S."/>
            <person name="Zaccaria P."/>
            <person name="Mewes H.-W."/>
            <person name="Mayer K.F.X."/>
            <person name="Kaul S."/>
            <person name="Town C.D."/>
            <person name="Koo H.L."/>
            <person name="Tallon L.J."/>
            <person name="Jenkins J."/>
            <person name="Rooney T."/>
            <person name="Rizzo M."/>
            <person name="Walts A."/>
            <person name="Utterback T."/>
            <person name="Fujii C.Y."/>
            <person name="Shea T.P."/>
            <person name="Creasy T.H."/>
            <person name="Haas B."/>
            <person name="Maiti R."/>
            <person name="Wu D."/>
            <person name="Peterson J."/>
            <person name="Van Aken S."/>
            <person name="Pai G."/>
            <person name="Militscher J."/>
            <person name="Sellers P."/>
            <person name="Gill J.E."/>
            <person name="Feldblyum T.V."/>
            <person name="Preuss D."/>
            <person name="Lin X."/>
            <person name="Nierman W.C."/>
            <person name="Salzberg S.L."/>
            <person name="White O."/>
            <person name="Venter J.C."/>
            <person name="Fraser C.M."/>
            <person name="Kaneko T."/>
            <person name="Nakamura Y."/>
            <person name="Sato S."/>
            <person name="Kato T."/>
            <person name="Asamizu E."/>
            <person name="Sasamoto S."/>
            <person name="Kimura T."/>
            <person name="Idesawa K."/>
            <person name="Kawashima K."/>
            <person name="Kishida Y."/>
            <person name="Kiyokawa C."/>
            <person name="Kohara M."/>
            <person name="Matsumoto M."/>
            <person name="Matsuno A."/>
            <person name="Muraki A."/>
            <person name="Nakayama S."/>
            <person name="Nakazaki N."/>
            <person name="Shinpo S."/>
            <person name="Takeuchi C."/>
            <person name="Wada T."/>
            <person name="Watanabe A."/>
            <person name="Yamada M."/>
            <person name="Yasuda M."/>
            <person name="Tabata S."/>
        </authorList>
    </citation>
    <scope>NUCLEOTIDE SEQUENCE [LARGE SCALE GENOMIC DNA]</scope>
    <source>
        <strain>cv. Columbia</strain>
    </source>
</reference>
<reference key="2">
    <citation type="journal article" date="2017" name="Plant J.">
        <title>Araport11: a complete reannotation of the Arabidopsis thaliana reference genome.</title>
        <authorList>
            <person name="Cheng C.Y."/>
            <person name="Krishnakumar V."/>
            <person name="Chan A.P."/>
            <person name="Thibaud-Nissen F."/>
            <person name="Schobel S."/>
            <person name="Town C.D."/>
        </authorList>
    </citation>
    <scope>GENOME REANNOTATION</scope>
    <source>
        <strain>cv. Columbia</strain>
    </source>
</reference>
<reference key="3">
    <citation type="journal article" date="2012" name="Plant Cell">
        <title>The DUF59 family gene AE7 acts in the cytosolic iron-sulfur cluster assembly pathway to maintain nuclear genome integrity in Arabidopsis.</title>
        <authorList>
            <person name="Luo D."/>
            <person name="Bernard D.G."/>
            <person name="Balk J."/>
            <person name="Hai H."/>
            <person name="Cui X."/>
        </authorList>
    </citation>
    <scope>FUNCTION</scope>
    <scope>IDENTIFICATION</scope>
    <source>
        <strain>cv. Columbia</strain>
    </source>
</reference>
<accession>A8MR89</accession>
<comment type="function">
    <text evidence="1 2">May play a role in chromosome segregation through establishment of sister chromatid cohesion (By similarity). Unable to complement ae7 mutants, and thus probably not involved in the cytosolic iron-sulfur assembly (CIA) pathway (PubMed:23104832).</text>
</comment>
<comment type="similarity">
    <text evidence="4">Belongs to the MIP18 family.</text>
</comment>
<name>AEL1_ARATH</name>
<evidence type="ECO:0000250" key="1">
    <source>
        <dbReference type="UniProtKB" id="Q9D187"/>
    </source>
</evidence>
<evidence type="ECO:0000269" key="2">
    <source>
    </source>
</evidence>
<evidence type="ECO:0000303" key="3">
    <source>
    </source>
</evidence>
<evidence type="ECO:0000305" key="4"/>
<evidence type="ECO:0000312" key="5">
    <source>
        <dbReference type="Araport" id="AT3G50845"/>
    </source>
</evidence>
<evidence type="ECO:0000312" key="6">
    <source>
        <dbReference type="EMBL" id="AL049862"/>
    </source>
</evidence>
<evidence type="ECO:0000312" key="7">
    <source>
        <dbReference type="Proteomes" id="UP000006548"/>
    </source>
</evidence>
<proteinExistence type="inferred from homology"/>
<sequence>MTLGLINANPVVQAKKEGLVRREDQYRDDGVDPLEIYDYVRDIRDPEHPYTLEQLRVVSEESVTVDDKLDRILITFTPTIQHCSMANIIGLCLRAKLKECLQLHYKVDIRVSPGSHADEVSVNKQLNDKERVVAALENPNLRQLVDECIYSDEI</sequence>